<protein>
    <recommendedName>
        <fullName evidence="1">tRNA modification GTPase MnmE</fullName>
        <ecNumber evidence="1">3.6.-.-</ecNumber>
    </recommendedName>
</protein>
<comment type="function">
    <text evidence="1">Exhibits a very high intrinsic GTPase hydrolysis rate. Involved in the addition of a carboxymethylaminomethyl (cmnm) group at the wobble position (U34) of certain tRNAs, forming tRNA-cmnm(5)s(2)U34.</text>
</comment>
<comment type="cofactor">
    <cofactor evidence="1">
        <name>K(+)</name>
        <dbReference type="ChEBI" id="CHEBI:29103"/>
    </cofactor>
    <text evidence="1">Binds 1 potassium ion per subunit.</text>
</comment>
<comment type="subunit">
    <text evidence="1">Homodimer. Heterotetramer of two MnmE and two MnmG subunits.</text>
</comment>
<comment type="subcellular location">
    <subcellularLocation>
        <location evidence="1">Cytoplasm</location>
    </subcellularLocation>
</comment>
<comment type="similarity">
    <text evidence="1">Belongs to the TRAFAC class TrmE-Era-EngA-EngB-Septin-like GTPase superfamily. TrmE GTPase family.</text>
</comment>
<keyword id="KW-0963">Cytoplasm</keyword>
<keyword id="KW-0342">GTP-binding</keyword>
<keyword id="KW-0378">Hydrolase</keyword>
<keyword id="KW-0460">Magnesium</keyword>
<keyword id="KW-0479">Metal-binding</keyword>
<keyword id="KW-0547">Nucleotide-binding</keyword>
<keyword id="KW-0630">Potassium</keyword>
<keyword id="KW-0819">tRNA processing</keyword>
<evidence type="ECO:0000255" key="1">
    <source>
        <dbReference type="HAMAP-Rule" id="MF_00379"/>
    </source>
</evidence>
<proteinExistence type="inferred from homology"/>
<reference key="1">
    <citation type="journal article" date="2006" name="Science">
        <title>The 160-kilobase genome of the bacterial endosymbiont Carsonella.</title>
        <authorList>
            <person name="Nakabachi A."/>
            <person name="Yamashita A."/>
            <person name="Toh H."/>
            <person name="Ishikawa H."/>
            <person name="Dunbar H.E."/>
            <person name="Moran N.A."/>
            <person name="Hattori M."/>
        </authorList>
    </citation>
    <scope>NUCLEOTIDE SEQUENCE [LARGE SCALE GENOMIC DNA]</scope>
    <source>
        <strain>PV</strain>
    </source>
</reference>
<gene>
    <name evidence="1" type="primary">mnmE</name>
    <name evidence="1" type="synonym">trmE</name>
    <name type="ordered locus">CRP_001</name>
</gene>
<organism>
    <name type="scientific">Carsonella ruddii (strain PV)</name>
    <dbReference type="NCBI Taxonomy" id="387662"/>
    <lineage>
        <taxon>Bacteria</taxon>
        <taxon>Pseudomonadati</taxon>
        <taxon>Pseudomonadota</taxon>
        <taxon>Gammaproteobacteria</taxon>
        <taxon>Oceanospirillales</taxon>
        <taxon>Halomonadaceae</taxon>
        <taxon>Zymobacter group</taxon>
        <taxon>Candidatus Carsonella</taxon>
    </lineage>
</organism>
<name>MNME_CARRP</name>
<sequence length="438" mass="51218">MNTIFSRITPLGNGTLCVIRISGKNVKFLIQKIVKKNIKEKIATFSKLFLDKECVDYAMIIFFKKPNTFTGEDIIEFHIHNNETIVKKIINYLLLNKARFAKAGEFLERRYLNGKISLIECELINNKILYDNENMFQLTKNSEKKIFLCIIKNLKFKINSLIICIEIANFNFSFFFFNDFLFIKYTFKKLLKLLKILIDKITVINYLKKNFTIMILGRRNVGKSTLFNKICAQYDSIVTNIPGTTKNIISKKIKILSKKIKMMDTAGLKIRTKNLIEKIGIIKNINKIYQGNLILYMIDKFNIKNIFFNIPIDFIDKIKLNELIILVNKSDILGKEEGVFKIKNILIILISSKNGTFIKNLKCFINKIVDNKDFSKNNYSDVKILFNKFSFFYKEFSCNYDLVLSKLIDFQKNIFKLTGNFTNKKIINSCFRNFCIGK</sequence>
<accession>Q05FY9</accession>
<feature type="chain" id="PRO_0000345756" description="tRNA modification GTPase MnmE">
    <location>
        <begin position="1"/>
        <end position="438"/>
    </location>
</feature>
<feature type="domain" description="TrmE-type G">
    <location>
        <begin position="210"/>
        <end position="370"/>
    </location>
</feature>
<feature type="binding site" evidence="1">
    <location>
        <position position="20"/>
    </location>
    <ligand>
        <name>(6S)-5-formyl-5,6,7,8-tetrahydrofolate</name>
        <dbReference type="ChEBI" id="CHEBI:57457"/>
    </ligand>
</feature>
<feature type="binding site" evidence="1">
    <location>
        <position position="76"/>
    </location>
    <ligand>
        <name>(6S)-5-formyl-5,6,7,8-tetrahydrofolate</name>
        <dbReference type="ChEBI" id="CHEBI:57457"/>
    </ligand>
</feature>
<feature type="binding site" evidence="1">
    <location>
        <position position="115"/>
    </location>
    <ligand>
        <name>(6S)-5-formyl-5,6,7,8-tetrahydrofolate</name>
        <dbReference type="ChEBI" id="CHEBI:57457"/>
    </ligand>
</feature>
<feature type="binding site" evidence="1">
    <location>
        <begin position="220"/>
        <end position="225"/>
    </location>
    <ligand>
        <name>GTP</name>
        <dbReference type="ChEBI" id="CHEBI:37565"/>
    </ligand>
</feature>
<feature type="binding site" evidence="1">
    <location>
        <position position="220"/>
    </location>
    <ligand>
        <name>K(+)</name>
        <dbReference type="ChEBI" id="CHEBI:29103"/>
    </ligand>
</feature>
<feature type="binding site" evidence="1">
    <location>
        <position position="224"/>
    </location>
    <ligand>
        <name>Mg(2+)</name>
        <dbReference type="ChEBI" id="CHEBI:18420"/>
    </ligand>
</feature>
<feature type="binding site" evidence="1">
    <location>
        <begin position="239"/>
        <end position="245"/>
    </location>
    <ligand>
        <name>GTP</name>
        <dbReference type="ChEBI" id="CHEBI:37565"/>
    </ligand>
</feature>
<feature type="binding site" evidence="1">
    <location>
        <position position="239"/>
    </location>
    <ligand>
        <name>K(+)</name>
        <dbReference type="ChEBI" id="CHEBI:29103"/>
    </ligand>
</feature>
<feature type="binding site" evidence="1">
    <location>
        <position position="241"/>
    </location>
    <ligand>
        <name>K(+)</name>
        <dbReference type="ChEBI" id="CHEBI:29103"/>
    </ligand>
</feature>
<feature type="binding site" evidence="1">
    <location>
        <position position="244"/>
    </location>
    <ligand>
        <name>K(+)</name>
        <dbReference type="ChEBI" id="CHEBI:29103"/>
    </ligand>
</feature>
<feature type="binding site" evidence="1">
    <location>
        <position position="245"/>
    </location>
    <ligand>
        <name>Mg(2+)</name>
        <dbReference type="ChEBI" id="CHEBI:18420"/>
    </ligand>
</feature>
<feature type="binding site" evidence="1">
    <location>
        <begin position="264"/>
        <end position="267"/>
    </location>
    <ligand>
        <name>GTP</name>
        <dbReference type="ChEBI" id="CHEBI:37565"/>
    </ligand>
</feature>
<feature type="binding site" evidence="1">
    <location>
        <position position="438"/>
    </location>
    <ligand>
        <name>(6S)-5-formyl-5,6,7,8-tetrahydrofolate</name>
        <dbReference type="ChEBI" id="CHEBI:57457"/>
    </ligand>
</feature>
<dbReference type="EC" id="3.6.-.-" evidence="1"/>
<dbReference type="EMBL" id="AP009180">
    <property type="protein sequence ID" value="BAF35032.1"/>
    <property type="molecule type" value="Genomic_DNA"/>
</dbReference>
<dbReference type="RefSeq" id="WP_011672224.1">
    <property type="nucleotide sequence ID" value="NC_008512.1"/>
</dbReference>
<dbReference type="SMR" id="Q05FY9"/>
<dbReference type="STRING" id="387662.CRP_001"/>
<dbReference type="KEGG" id="crp:CRP_001"/>
<dbReference type="HOGENOM" id="CLU_019624_4_1_6"/>
<dbReference type="OrthoDB" id="9805918at2"/>
<dbReference type="Proteomes" id="UP000000777">
    <property type="component" value="Chromosome"/>
</dbReference>
<dbReference type="GO" id="GO:0005829">
    <property type="term" value="C:cytosol"/>
    <property type="evidence" value="ECO:0007669"/>
    <property type="project" value="TreeGrafter"/>
</dbReference>
<dbReference type="GO" id="GO:0005525">
    <property type="term" value="F:GTP binding"/>
    <property type="evidence" value="ECO:0007669"/>
    <property type="project" value="UniProtKB-UniRule"/>
</dbReference>
<dbReference type="GO" id="GO:0003924">
    <property type="term" value="F:GTPase activity"/>
    <property type="evidence" value="ECO:0007669"/>
    <property type="project" value="UniProtKB-UniRule"/>
</dbReference>
<dbReference type="GO" id="GO:0046872">
    <property type="term" value="F:metal ion binding"/>
    <property type="evidence" value="ECO:0007669"/>
    <property type="project" value="UniProtKB-KW"/>
</dbReference>
<dbReference type="GO" id="GO:0030488">
    <property type="term" value="P:tRNA methylation"/>
    <property type="evidence" value="ECO:0007669"/>
    <property type="project" value="TreeGrafter"/>
</dbReference>
<dbReference type="GO" id="GO:0002098">
    <property type="term" value="P:tRNA wobble uridine modification"/>
    <property type="evidence" value="ECO:0007669"/>
    <property type="project" value="TreeGrafter"/>
</dbReference>
<dbReference type="CDD" id="cd14858">
    <property type="entry name" value="TrmE_N"/>
    <property type="match status" value="1"/>
</dbReference>
<dbReference type="Gene3D" id="3.40.50.300">
    <property type="entry name" value="P-loop containing nucleotide triphosphate hydrolases"/>
    <property type="match status" value="1"/>
</dbReference>
<dbReference type="Gene3D" id="3.30.1360.120">
    <property type="entry name" value="Probable tRNA modification gtpase trme, domain 1"/>
    <property type="match status" value="1"/>
</dbReference>
<dbReference type="HAMAP" id="MF_00379">
    <property type="entry name" value="GTPase_MnmE"/>
    <property type="match status" value="1"/>
</dbReference>
<dbReference type="InterPro" id="IPR031168">
    <property type="entry name" value="G_TrmE"/>
</dbReference>
<dbReference type="InterPro" id="IPR006073">
    <property type="entry name" value="GTP-bd"/>
</dbReference>
<dbReference type="InterPro" id="IPR018948">
    <property type="entry name" value="GTP-bd_TrmE_N"/>
</dbReference>
<dbReference type="InterPro" id="IPR004520">
    <property type="entry name" value="GTPase_MnmE"/>
</dbReference>
<dbReference type="InterPro" id="IPR027417">
    <property type="entry name" value="P-loop_NTPase"/>
</dbReference>
<dbReference type="InterPro" id="IPR005225">
    <property type="entry name" value="Small_GTP-bd"/>
</dbReference>
<dbReference type="InterPro" id="IPR027266">
    <property type="entry name" value="TrmE/GcvT_dom1"/>
</dbReference>
<dbReference type="NCBIfam" id="TIGR00231">
    <property type="entry name" value="small_GTP"/>
    <property type="match status" value="1"/>
</dbReference>
<dbReference type="PANTHER" id="PTHR42714">
    <property type="entry name" value="TRNA MODIFICATION GTPASE GTPBP3"/>
    <property type="match status" value="1"/>
</dbReference>
<dbReference type="PANTHER" id="PTHR42714:SF2">
    <property type="entry name" value="TRNA MODIFICATION GTPASE GTPBP3, MITOCHONDRIAL"/>
    <property type="match status" value="1"/>
</dbReference>
<dbReference type="Pfam" id="PF01926">
    <property type="entry name" value="MMR_HSR1"/>
    <property type="match status" value="1"/>
</dbReference>
<dbReference type="Pfam" id="PF10396">
    <property type="entry name" value="TrmE_N"/>
    <property type="match status" value="1"/>
</dbReference>
<dbReference type="SUPFAM" id="SSF103025">
    <property type="entry name" value="Folate-binding domain"/>
    <property type="match status" value="1"/>
</dbReference>
<dbReference type="SUPFAM" id="SSF52540">
    <property type="entry name" value="P-loop containing nucleoside triphosphate hydrolases"/>
    <property type="match status" value="1"/>
</dbReference>
<dbReference type="PROSITE" id="PS51709">
    <property type="entry name" value="G_TRME"/>
    <property type="match status" value="1"/>
</dbReference>